<dbReference type="EMBL" id="U13368">
    <property type="protein sequence ID" value="AAA52103.1"/>
    <property type="molecule type" value="mRNA"/>
</dbReference>
<dbReference type="EMBL" id="U07126">
    <property type="protein sequence ID" value="AAA62866.1"/>
    <property type="molecule type" value="mRNA"/>
</dbReference>
<dbReference type="PIR" id="I57959">
    <property type="entry name" value="I57959"/>
</dbReference>
<dbReference type="RefSeq" id="NP_058887.2">
    <property type="nucleotide sequence ID" value="NM_017191.2"/>
</dbReference>
<dbReference type="RefSeq" id="XP_006252169.1">
    <property type="nucleotide sequence ID" value="XM_006252107.5"/>
</dbReference>
<dbReference type="RefSeq" id="XP_008768966.1">
    <property type="nucleotide sequence ID" value="XM_008770744.2"/>
</dbReference>
<dbReference type="RefSeq" id="XP_063130251.1">
    <property type="nucleotide sequence ID" value="XM_063274181.1"/>
</dbReference>
<dbReference type="SMR" id="P43140"/>
<dbReference type="CORUM" id="P43140"/>
<dbReference type="FunCoup" id="P43140">
    <property type="interactions" value="1560"/>
</dbReference>
<dbReference type="IntAct" id="P43140">
    <property type="interactions" value="1"/>
</dbReference>
<dbReference type="STRING" id="10116.ENSRNOP00000012736"/>
<dbReference type="BindingDB" id="P43140"/>
<dbReference type="ChEMBL" id="CHEMBL319"/>
<dbReference type="DrugCentral" id="P43140"/>
<dbReference type="GuidetoPHARMACOLOGY" id="22"/>
<dbReference type="GlyCosmos" id="P43140">
    <property type="glycosylation" value="3 sites, No reported glycans"/>
</dbReference>
<dbReference type="GlyGen" id="P43140">
    <property type="glycosylation" value="3 sites"/>
</dbReference>
<dbReference type="PhosphoSitePlus" id="P43140"/>
<dbReference type="PaxDb" id="10116-ENSRNOP00000012736"/>
<dbReference type="GeneID" id="29412"/>
<dbReference type="KEGG" id="rno:29412"/>
<dbReference type="UCSC" id="RGD:2055">
    <property type="organism name" value="rat"/>
</dbReference>
<dbReference type="AGR" id="RGD:2055"/>
<dbReference type="CTD" id="148"/>
<dbReference type="RGD" id="2055">
    <property type="gene designation" value="Adra1a"/>
</dbReference>
<dbReference type="VEuPathDB" id="HostDB:ENSRNOG00000009522"/>
<dbReference type="eggNOG" id="KOG3656">
    <property type="taxonomic scope" value="Eukaryota"/>
</dbReference>
<dbReference type="HOGENOM" id="CLU_009579_11_6_1"/>
<dbReference type="InParanoid" id="P43140"/>
<dbReference type="OrthoDB" id="6358729at2759"/>
<dbReference type="PhylomeDB" id="P43140"/>
<dbReference type="TreeFam" id="TF331895"/>
<dbReference type="Reactome" id="R-RNO-390696">
    <property type="pathway name" value="Adrenoceptors"/>
</dbReference>
<dbReference type="Reactome" id="R-RNO-416476">
    <property type="pathway name" value="G alpha (q) signalling events"/>
</dbReference>
<dbReference type="Reactome" id="R-RNO-416482">
    <property type="pathway name" value="G alpha (12/13) signalling events"/>
</dbReference>
<dbReference type="PRO" id="PR:P43140"/>
<dbReference type="Proteomes" id="UP000002494">
    <property type="component" value="Chromosome 15"/>
</dbReference>
<dbReference type="Bgee" id="ENSRNOG00000009522">
    <property type="expression patterns" value="Expressed in heart and 10 other cell types or tissues"/>
</dbReference>
<dbReference type="GO" id="GO:0005901">
    <property type="term" value="C:caveola"/>
    <property type="evidence" value="ECO:0007669"/>
    <property type="project" value="UniProtKB-SubCell"/>
</dbReference>
<dbReference type="GO" id="GO:0005737">
    <property type="term" value="C:cytoplasm"/>
    <property type="evidence" value="ECO:0000266"/>
    <property type="project" value="RGD"/>
</dbReference>
<dbReference type="GO" id="GO:0098691">
    <property type="term" value="C:dopaminergic synapse"/>
    <property type="evidence" value="ECO:0000314"/>
    <property type="project" value="SynGO"/>
</dbReference>
<dbReference type="GO" id="GO:0098982">
    <property type="term" value="C:GABA-ergic synapse"/>
    <property type="evidence" value="ECO:0000314"/>
    <property type="project" value="SynGO"/>
</dbReference>
<dbReference type="GO" id="GO:0098978">
    <property type="term" value="C:glutamatergic synapse"/>
    <property type="evidence" value="ECO:0000314"/>
    <property type="project" value="SynGO"/>
</dbReference>
<dbReference type="GO" id="GO:0016020">
    <property type="term" value="C:membrane"/>
    <property type="evidence" value="ECO:0000266"/>
    <property type="project" value="RGD"/>
</dbReference>
<dbReference type="GO" id="GO:0031965">
    <property type="term" value="C:nuclear membrane"/>
    <property type="evidence" value="ECO:0000250"/>
    <property type="project" value="UniProtKB"/>
</dbReference>
<dbReference type="GO" id="GO:0005634">
    <property type="term" value="C:nucleus"/>
    <property type="evidence" value="ECO:0000250"/>
    <property type="project" value="UniProtKB"/>
</dbReference>
<dbReference type="GO" id="GO:0005886">
    <property type="term" value="C:plasma membrane"/>
    <property type="evidence" value="ECO:0000266"/>
    <property type="project" value="RGD"/>
</dbReference>
<dbReference type="GO" id="GO:0045211">
    <property type="term" value="C:postsynaptic membrane"/>
    <property type="evidence" value="ECO:0000314"/>
    <property type="project" value="SynGO"/>
</dbReference>
<dbReference type="GO" id="GO:0042734">
    <property type="term" value="C:presynaptic membrane"/>
    <property type="evidence" value="ECO:0000314"/>
    <property type="project" value="SynGO"/>
</dbReference>
<dbReference type="GO" id="GO:0030315">
    <property type="term" value="C:T-tubule"/>
    <property type="evidence" value="ECO:0000314"/>
    <property type="project" value="RGD"/>
</dbReference>
<dbReference type="GO" id="GO:0030018">
    <property type="term" value="C:Z disc"/>
    <property type="evidence" value="ECO:0000314"/>
    <property type="project" value="RGD"/>
</dbReference>
<dbReference type="GO" id="GO:0004937">
    <property type="term" value="F:alpha1-adrenergic receptor activity"/>
    <property type="evidence" value="ECO:0000266"/>
    <property type="project" value="RGD"/>
</dbReference>
<dbReference type="GO" id="GO:0046982">
    <property type="term" value="F:protein heterodimerization activity"/>
    <property type="evidence" value="ECO:0000250"/>
    <property type="project" value="UniProtKB"/>
</dbReference>
<dbReference type="GO" id="GO:0071880">
    <property type="term" value="P:adenylate cyclase-activating adrenergic receptor signaling pathway"/>
    <property type="evidence" value="ECO:0000318"/>
    <property type="project" value="GO_Central"/>
</dbReference>
<dbReference type="GO" id="GO:0071875">
    <property type="term" value="P:adrenergic receptor signaling pathway"/>
    <property type="evidence" value="ECO:0000266"/>
    <property type="project" value="RGD"/>
</dbReference>
<dbReference type="GO" id="GO:0007512">
    <property type="term" value="P:adult heart development"/>
    <property type="evidence" value="ECO:0000266"/>
    <property type="project" value="RGD"/>
</dbReference>
<dbReference type="GO" id="GO:0061049">
    <property type="term" value="P:cell growth involved in cardiac muscle cell development"/>
    <property type="evidence" value="ECO:0000266"/>
    <property type="project" value="RGD"/>
</dbReference>
<dbReference type="GO" id="GO:0007267">
    <property type="term" value="P:cell-cell signaling"/>
    <property type="evidence" value="ECO:0000318"/>
    <property type="project" value="GO_Central"/>
</dbReference>
<dbReference type="GO" id="GO:0000165">
    <property type="term" value="P:MAPK cascade"/>
    <property type="evidence" value="ECO:0000266"/>
    <property type="project" value="RGD"/>
</dbReference>
<dbReference type="GO" id="GO:0010507">
    <property type="term" value="P:negative regulation of autophagy"/>
    <property type="evidence" value="ECO:0000266"/>
    <property type="project" value="RGD"/>
</dbReference>
<dbReference type="GO" id="GO:0001985">
    <property type="term" value="P:negative regulation of heart rate involved in baroreceptor response to increased systemic arterial blood pressure"/>
    <property type="evidence" value="ECO:0000266"/>
    <property type="project" value="RGD"/>
</dbReference>
<dbReference type="GO" id="GO:0035024">
    <property type="term" value="P:negative regulation of Rho protein signal transduction"/>
    <property type="evidence" value="ECO:0000315"/>
    <property type="project" value="MGI"/>
</dbReference>
<dbReference type="GO" id="GO:0150099">
    <property type="term" value="P:neuron-glial cell signaling"/>
    <property type="evidence" value="ECO:0000266"/>
    <property type="project" value="RGD"/>
</dbReference>
<dbReference type="GO" id="GO:0001994">
    <property type="term" value="P:norepinephrine-epinephrine vasoconstriction involved in regulation of systemic arterial blood pressure"/>
    <property type="evidence" value="ECO:0000266"/>
    <property type="project" value="RGD"/>
</dbReference>
<dbReference type="GO" id="GO:0035265">
    <property type="term" value="P:organ growth"/>
    <property type="evidence" value="ECO:0000266"/>
    <property type="project" value="RGD"/>
</dbReference>
<dbReference type="GO" id="GO:0071882">
    <property type="term" value="P:phospholipase C-activating adrenergic receptor signaling pathway"/>
    <property type="evidence" value="ECO:0000315"/>
    <property type="project" value="BHF-UCL"/>
</dbReference>
<dbReference type="GO" id="GO:0007200">
    <property type="term" value="P:phospholipase C-activating G protein-coupled receptor signaling pathway"/>
    <property type="evidence" value="ECO:0000266"/>
    <property type="project" value="RGD"/>
</dbReference>
<dbReference type="GO" id="GO:0097195">
    <property type="term" value="P:pilomotor reflex"/>
    <property type="evidence" value="ECO:0000266"/>
    <property type="project" value="RGD"/>
</dbReference>
<dbReference type="GO" id="GO:0045760">
    <property type="term" value="P:positive regulation of action potential"/>
    <property type="evidence" value="ECO:0000315"/>
    <property type="project" value="RGD"/>
</dbReference>
<dbReference type="GO" id="GO:0060452">
    <property type="term" value="P:positive regulation of cardiac muscle contraction"/>
    <property type="evidence" value="ECO:0000315"/>
    <property type="project" value="BHF-UCL"/>
</dbReference>
<dbReference type="GO" id="GO:0010613">
    <property type="term" value="P:positive regulation of cardiac muscle hypertrophy"/>
    <property type="evidence" value="ECO:0000266"/>
    <property type="project" value="RGD"/>
</dbReference>
<dbReference type="GO" id="GO:0007204">
    <property type="term" value="P:positive regulation of cytosolic calcium ion concentration"/>
    <property type="evidence" value="ECO:0000315"/>
    <property type="project" value="RGD"/>
</dbReference>
<dbReference type="GO" id="GO:0070374">
    <property type="term" value="P:positive regulation of ERK1 and ERK2 cascade"/>
    <property type="evidence" value="ECO:0000315"/>
    <property type="project" value="BHF-UCL"/>
</dbReference>
<dbReference type="GO" id="GO:0010460">
    <property type="term" value="P:positive regulation of heart rate"/>
    <property type="evidence" value="ECO:0000315"/>
    <property type="project" value="RGD"/>
</dbReference>
<dbReference type="GO" id="GO:0001996">
    <property type="term" value="P:positive regulation of heart rate by epinephrine-norepinephrine"/>
    <property type="evidence" value="ECO:0000266"/>
    <property type="project" value="RGD"/>
</dbReference>
<dbReference type="GO" id="GO:0043410">
    <property type="term" value="P:positive regulation of MAPK cascade"/>
    <property type="evidence" value="ECO:0000250"/>
    <property type="project" value="UniProtKB"/>
</dbReference>
<dbReference type="GO" id="GO:0141214">
    <property type="term" value="P:positive regulation of phospholipase C/protein kinase C signal transduction"/>
    <property type="evidence" value="ECO:0000315"/>
    <property type="project" value="RGD"/>
</dbReference>
<dbReference type="GO" id="GO:0045987">
    <property type="term" value="P:positive regulation of smooth muscle contraction"/>
    <property type="evidence" value="ECO:0000315"/>
    <property type="project" value="RGD"/>
</dbReference>
<dbReference type="GO" id="GO:0032230">
    <property type="term" value="P:positive regulation of synaptic transmission, GABAergic"/>
    <property type="evidence" value="ECO:0000314"/>
    <property type="project" value="RGD"/>
</dbReference>
<dbReference type="GO" id="GO:0003084">
    <property type="term" value="P:positive regulation of systemic arterial blood pressure"/>
    <property type="evidence" value="ECO:0000315"/>
    <property type="project" value="RGD"/>
</dbReference>
<dbReference type="GO" id="GO:0001997">
    <property type="term" value="P:positive regulation of the force of heart contraction by epinephrine-norepinephrine"/>
    <property type="evidence" value="ECO:0000266"/>
    <property type="project" value="RGD"/>
</dbReference>
<dbReference type="GO" id="GO:0045907">
    <property type="term" value="P:positive regulation of vasoconstriction"/>
    <property type="evidence" value="ECO:0000314"/>
    <property type="project" value="RGD"/>
</dbReference>
<dbReference type="GO" id="GO:0099171">
    <property type="term" value="P:presynaptic modulation of chemical synaptic transmission"/>
    <property type="evidence" value="ECO:0000314"/>
    <property type="project" value="SynGO"/>
</dbReference>
<dbReference type="GO" id="GO:0008217">
    <property type="term" value="P:regulation of blood pressure"/>
    <property type="evidence" value="ECO:0000266"/>
    <property type="project" value="RGD"/>
</dbReference>
<dbReference type="GO" id="GO:0009725">
    <property type="term" value="P:response to hormone"/>
    <property type="evidence" value="ECO:0000315"/>
    <property type="project" value="RGD"/>
</dbReference>
<dbReference type="GO" id="GO:0009410">
    <property type="term" value="P:response to xenobiotic stimulus"/>
    <property type="evidence" value="ECO:0000315"/>
    <property type="project" value="RGD"/>
</dbReference>
<dbReference type="CDD" id="cd15325">
    <property type="entry name" value="7tmA_alpha1A_AR"/>
    <property type="match status" value="1"/>
</dbReference>
<dbReference type="FunFam" id="1.20.1070.10:FF:000027">
    <property type="entry name" value="alpha-1A adrenergic receptor"/>
    <property type="match status" value="1"/>
</dbReference>
<dbReference type="Gene3D" id="1.20.1070.10">
    <property type="entry name" value="Rhodopsin 7-helix transmembrane proteins"/>
    <property type="match status" value="1"/>
</dbReference>
<dbReference type="InterPro" id="IPR002233">
    <property type="entry name" value="ADR_fam"/>
</dbReference>
<dbReference type="InterPro" id="IPR001004">
    <property type="entry name" value="ADRA1A_rcpt"/>
</dbReference>
<dbReference type="InterPro" id="IPR000276">
    <property type="entry name" value="GPCR_Rhodpsn"/>
</dbReference>
<dbReference type="InterPro" id="IPR017452">
    <property type="entry name" value="GPCR_Rhodpsn_7TM"/>
</dbReference>
<dbReference type="PANTHER" id="PTHR24248">
    <property type="entry name" value="ADRENERGIC RECEPTOR-RELATED G-PROTEIN COUPLED RECEPTOR"/>
    <property type="match status" value="1"/>
</dbReference>
<dbReference type="PANTHER" id="PTHR24248:SF16">
    <property type="entry name" value="ALPHA-1A ADRENERGIC RECEPTOR"/>
    <property type="match status" value="1"/>
</dbReference>
<dbReference type="Pfam" id="PF00001">
    <property type="entry name" value="7tm_1"/>
    <property type="match status" value="1"/>
</dbReference>
<dbReference type="PRINTS" id="PR01103">
    <property type="entry name" value="ADRENERGICR"/>
</dbReference>
<dbReference type="PRINTS" id="PR00557">
    <property type="entry name" value="ADRENRGCA1AR"/>
</dbReference>
<dbReference type="PRINTS" id="PR00237">
    <property type="entry name" value="GPCRRHODOPSN"/>
</dbReference>
<dbReference type="SMART" id="SM01381">
    <property type="entry name" value="7TM_GPCR_Srsx"/>
    <property type="match status" value="1"/>
</dbReference>
<dbReference type="SUPFAM" id="SSF81321">
    <property type="entry name" value="Family A G protein-coupled receptor-like"/>
    <property type="match status" value="1"/>
</dbReference>
<dbReference type="PROSITE" id="PS00237">
    <property type="entry name" value="G_PROTEIN_RECEP_F1_1"/>
    <property type="match status" value="1"/>
</dbReference>
<dbReference type="PROSITE" id="PS50262">
    <property type="entry name" value="G_PROTEIN_RECEP_F1_2"/>
    <property type="match status" value="1"/>
</dbReference>
<name>ADA1A_RAT</name>
<proteinExistence type="evidence at transcript level"/>
<organism>
    <name type="scientific">Rattus norvegicus</name>
    <name type="common">Rat</name>
    <dbReference type="NCBI Taxonomy" id="10116"/>
    <lineage>
        <taxon>Eukaryota</taxon>
        <taxon>Metazoa</taxon>
        <taxon>Chordata</taxon>
        <taxon>Craniata</taxon>
        <taxon>Vertebrata</taxon>
        <taxon>Euteleostomi</taxon>
        <taxon>Mammalia</taxon>
        <taxon>Eutheria</taxon>
        <taxon>Euarchontoglires</taxon>
        <taxon>Glires</taxon>
        <taxon>Rodentia</taxon>
        <taxon>Myomorpha</taxon>
        <taxon>Muroidea</taxon>
        <taxon>Muridae</taxon>
        <taxon>Murinae</taxon>
        <taxon>Rattus</taxon>
    </lineage>
</organism>
<reference key="1">
    <citation type="journal article" date="1994" name="Circ. Res.">
        <title>Cloning of the rat alpha 1C-adrenergic receptor from cardiac myocytes. Alpha 1C, alpha 1B, and alpha 1D mRNAs are present in cardiac myocytes but not in cardiac fibroblasts.</title>
        <authorList>
            <person name="Stewart A.F."/>
            <person name="Rokosh D.G."/>
            <person name="Bailey B.A."/>
            <person name="Karns L.R."/>
            <person name="Chang K.C."/>
            <person name="Long C.S."/>
            <person name="Kariya K."/>
            <person name="Simpson P.C."/>
        </authorList>
    </citation>
    <scope>NUCLEOTIDE SEQUENCE [MRNA]</scope>
    <source>
        <strain>Sprague-Dawley</strain>
        <tissue>Heart muscle</tissue>
    </source>
</reference>
<reference key="2">
    <citation type="journal article" date="1994" name="Mol. Pharmacol.">
        <title>The rat homologue of the bovine alpha 1c-adrenergic receptor shows the pharmacological properties of the classical alpha 1A subtype.</title>
        <authorList>
            <person name="Laz T.M."/>
            <person name="Forray C."/>
            <person name="Smith K.E."/>
            <person name="Bard J.A."/>
            <person name="Vaysse P.J."/>
            <person name="Branchek T.A."/>
            <person name="Weinshank R.L."/>
        </authorList>
    </citation>
    <scope>NUCLEOTIDE SEQUENCE [MRNA]</scope>
    <source>
        <tissue>Brain</tissue>
    </source>
</reference>
<reference key="3">
    <citation type="journal article" date="1994" name="Biochem. Biophys. Res. Commun.">
        <title>Distribution of alpha 1C-adrenergic receptor mRNA in adult rat tissues by RNase protection assay and comparison with alpha 1B and alpha 1D.</title>
        <authorList>
            <person name="Rokosh D.G."/>
            <person name="Bailey B.A."/>
            <person name="Stewart A.F."/>
            <person name="Karns L.R."/>
            <person name="Long C.S."/>
            <person name="Simpson P.C."/>
        </authorList>
    </citation>
    <scope>TISSUE SPECIFICITY</scope>
</reference>
<protein>
    <recommendedName>
        <fullName>Alpha-1A adrenergic receptor</fullName>
    </recommendedName>
    <alternativeName>
        <fullName>Alpha-1A adrenoreceptor</fullName>
        <shortName>Alpha-1A adrenoceptor</shortName>
    </alternativeName>
    <alternativeName>
        <fullName>Alpha-1C adrenergic receptor</fullName>
    </alternativeName>
</protein>
<feature type="chain" id="PRO_0000069066" description="Alpha-1A adrenergic receptor">
    <location>
        <begin position="1"/>
        <end position="466"/>
    </location>
</feature>
<feature type="topological domain" description="Extracellular" evidence="1">
    <location>
        <begin position="1"/>
        <end position="27"/>
    </location>
</feature>
<feature type="transmembrane region" description="Helical; Name=1" evidence="1">
    <location>
        <begin position="28"/>
        <end position="51"/>
    </location>
</feature>
<feature type="topological domain" description="Cytoplasmic" evidence="1">
    <location>
        <begin position="52"/>
        <end position="64"/>
    </location>
</feature>
<feature type="transmembrane region" description="Helical; Name=2" evidence="1">
    <location>
        <begin position="65"/>
        <end position="88"/>
    </location>
</feature>
<feature type="topological domain" description="Extracellular" evidence="1">
    <location>
        <begin position="89"/>
        <end position="99"/>
    </location>
</feature>
<feature type="transmembrane region" description="Helical; Name=3" evidence="1">
    <location>
        <begin position="100"/>
        <end position="122"/>
    </location>
</feature>
<feature type="topological domain" description="Cytoplasmic" evidence="1">
    <location>
        <begin position="123"/>
        <end position="143"/>
    </location>
</feature>
<feature type="transmembrane region" description="Helical; Name=4" evidence="1">
    <location>
        <begin position="144"/>
        <end position="167"/>
    </location>
</feature>
<feature type="topological domain" description="Extracellular" evidence="1">
    <location>
        <begin position="168"/>
        <end position="181"/>
    </location>
</feature>
<feature type="transmembrane region" description="Helical; Name=5" evidence="1">
    <location>
        <begin position="182"/>
        <end position="205"/>
    </location>
</feature>
<feature type="topological domain" description="Cytoplasmic" evidence="1">
    <location>
        <begin position="206"/>
        <end position="273"/>
    </location>
</feature>
<feature type="transmembrane region" description="Helical; Name=6" evidence="1">
    <location>
        <begin position="274"/>
        <end position="297"/>
    </location>
</feature>
<feature type="topological domain" description="Extracellular" evidence="1">
    <location>
        <begin position="298"/>
        <end position="305"/>
    </location>
</feature>
<feature type="transmembrane region" description="Helical; Name=7" evidence="1">
    <location>
        <begin position="306"/>
        <end position="329"/>
    </location>
</feature>
<feature type="topological domain" description="Cytoplasmic" evidence="1">
    <location>
        <begin position="330"/>
        <end position="466"/>
    </location>
</feature>
<feature type="short sequence motif" description="Nuclear localization signal" evidence="1">
    <location>
        <begin position="334"/>
        <end position="349"/>
    </location>
</feature>
<feature type="modified residue" description="Phosphoserine; by PKA" evidence="3">
    <location>
        <position position="215"/>
    </location>
</feature>
<feature type="lipid moiety-binding region" description="S-palmitoyl cysteine" evidence="3">
    <location>
        <position position="345"/>
    </location>
</feature>
<feature type="glycosylation site" description="N-linked (GlcNAc...) asparagine" evidence="3">
    <location>
        <position position="7"/>
    </location>
</feature>
<feature type="glycosylation site" description="N-linked (GlcNAc...) asparagine" evidence="3">
    <location>
        <position position="13"/>
    </location>
</feature>
<feature type="glycosylation site" description="N-linked (GlcNAc...) asparagine" evidence="3">
    <location>
        <position position="22"/>
    </location>
</feature>
<feature type="disulfide bond" evidence="4">
    <location>
        <begin position="99"/>
        <end position="176"/>
    </location>
</feature>
<feature type="sequence conflict" description="In Ref. 1; AAA52103." evidence="6" ref="1">
    <original>F</original>
    <variation>L</variation>
    <location>
        <position position="39"/>
    </location>
</feature>
<feature type="sequence conflict" description="In Ref. 1; AAA52103." evidence="6" ref="1">
    <original>N</original>
    <variation>G</variation>
    <location>
        <position position="67"/>
    </location>
</feature>
<accession>P43140</accession>
<sequence length="466" mass="51598">MVLLSENASEGSNCTHPPAPVNISKAILLGVILGGLIIFGVLGNILVILSVACHRHLHSVTHYYIVNLAVADLLLTSTVLPFSAIFEILGYWAFGRVFCNIWAAVDVLCCTASIMGLCIISIDRYIGVSYPLRYPTIVTQRRGVRALLCVWVLSLVISIGPLFGWRQPAPEDETICQINEEPGYVLFSALGSFYVPLAIILVMYCRVYVVAKRESRGLKSGLKTDKSDSEQVTLRIHRKNVPAEGGGVSSAKNKTHFSVRLLKFSREKKAAKTLGIVVGCFVLCWLPFFLVMPIGSFFPDFKPSETVFKIVFWLGYLNSCINPIIYPCSSQEFKKAFQNVLRIQCLRRRQSSKHALGYTLHPPSQALEGQHRDMVRIPVGSGETFYKISKTDGVCEWKFFSSMPQGSARITVPKDQSACTTARVRSKSFLQVCCCVGSSAPRPEENHQVPTIKIHTISLGENGEEV</sequence>
<gene>
    <name type="primary">Adra1a</name>
    <name type="synonym">Adra1c</name>
</gene>
<keyword id="KW-1003">Cell membrane</keyword>
<keyword id="KW-0963">Cytoplasm</keyword>
<keyword id="KW-1015">Disulfide bond</keyword>
<keyword id="KW-0297">G-protein coupled receptor</keyword>
<keyword id="KW-0325">Glycoprotein</keyword>
<keyword id="KW-0449">Lipoprotein</keyword>
<keyword id="KW-0472">Membrane</keyword>
<keyword id="KW-0539">Nucleus</keyword>
<keyword id="KW-0564">Palmitate</keyword>
<keyword id="KW-0597">Phosphoprotein</keyword>
<keyword id="KW-0675">Receptor</keyword>
<keyword id="KW-1185">Reference proteome</keyword>
<keyword id="KW-0807">Transducer</keyword>
<keyword id="KW-0812">Transmembrane</keyword>
<keyword id="KW-1133">Transmembrane helix</keyword>
<evidence type="ECO:0000250" key="1"/>
<evidence type="ECO:0000250" key="2">
    <source>
        <dbReference type="UniProtKB" id="P35348"/>
    </source>
</evidence>
<evidence type="ECO:0000255" key="3"/>
<evidence type="ECO:0000255" key="4">
    <source>
        <dbReference type="PROSITE-ProRule" id="PRU00521"/>
    </source>
</evidence>
<evidence type="ECO:0000269" key="5">
    <source>
    </source>
</evidence>
<evidence type="ECO:0000305" key="6"/>
<comment type="function">
    <text evidence="1">This alpha-adrenergic receptor mediates its action by association with G proteins that activate a phosphatidylinositol-calcium second messenger system. Its effect is mediated by G(q) and G(11) proteins. Nuclear ADRA1A-ADRA1B heterooligomers regulate phenylephrine (PE)-stimulated ERK signaling in cardiac myocytes (By similarity).</text>
</comment>
<comment type="subunit">
    <text evidence="2">Homo- and heterooligomer. Heterooligomerizes with ADRA1B homooligomers in cardiac myocytes. Interacts with CAVIN4.</text>
</comment>
<comment type="subcellular location">
    <subcellularLocation>
        <location>Nucleus membrane</location>
        <topology>Multi-pass membrane protein</topology>
    </subcellularLocation>
    <subcellularLocation>
        <location evidence="2">Cell membrane</location>
        <topology evidence="3">Multi-pass membrane protein</topology>
    </subcellularLocation>
    <subcellularLocation>
        <location evidence="2">Cytoplasm</location>
    </subcellularLocation>
    <subcellularLocation>
        <location evidence="2">Membrane</location>
        <location evidence="2">Caveola</location>
    </subcellularLocation>
    <text evidence="1">Location at the nuclear membrane facilitates heterooligomerization and regulates ERK-mediated signaling in cardiac myocytes. Colocalizes with GNAQ, PLCB1 as well as LAP2 at the nuclear membrane of cardiac myocytes (By similarity).</text>
</comment>
<comment type="tissue specificity">
    <text evidence="5">Abundant in heart, brain, aorta, vena cava, vas deferens, submaxillary gland, lung, and kidney. Found at lower levels in prostate, parotid gland and skeletal muscle.</text>
</comment>
<comment type="PTM">
    <text evidence="1">C-terminal Ser or Thr residues may be phosphorylated.</text>
</comment>
<comment type="similarity">
    <text evidence="4">Belongs to the G-protein coupled receptor 1 family. Adrenergic receptor subfamily. ADRA1A sub-subfamily.</text>
</comment>